<proteinExistence type="evidence at protein level"/>
<protein>
    <recommendedName>
        <fullName>Uncharacterized protein YML108W</fullName>
    </recommendedName>
</protein>
<reference key="1">
    <citation type="journal article" date="1997" name="Nature">
        <title>The nucleotide sequence of Saccharomyces cerevisiae chromosome XIII.</title>
        <authorList>
            <person name="Bowman S."/>
            <person name="Churcher C.M."/>
            <person name="Badcock K."/>
            <person name="Brown D."/>
            <person name="Chillingworth T."/>
            <person name="Connor R."/>
            <person name="Dedman K."/>
            <person name="Devlin K."/>
            <person name="Gentles S."/>
            <person name="Hamlin N."/>
            <person name="Hunt S."/>
            <person name="Jagels K."/>
            <person name="Lye G."/>
            <person name="Moule S."/>
            <person name="Odell C."/>
            <person name="Pearson D."/>
            <person name="Rajandream M.A."/>
            <person name="Rice P."/>
            <person name="Skelton J."/>
            <person name="Walsh S.V."/>
            <person name="Whitehead S."/>
            <person name="Barrell B.G."/>
        </authorList>
    </citation>
    <scope>NUCLEOTIDE SEQUENCE [LARGE SCALE GENOMIC DNA]</scope>
    <source>
        <strain>ATCC 204508 / S288c</strain>
    </source>
</reference>
<reference key="2">
    <citation type="journal article" date="2014" name="G3 (Bethesda)">
        <title>The reference genome sequence of Saccharomyces cerevisiae: Then and now.</title>
        <authorList>
            <person name="Engel S.R."/>
            <person name="Dietrich F.S."/>
            <person name="Fisk D.G."/>
            <person name="Binkley G."/>
            <person name="Balakrishnan R."/>
            <person name="Costanzo M.C."/>
            <person name="Dwight S.S."/>
            <person name="Hitz B.C."/>
            <person name="Karra K."/>
            <person name="Nash R.S."/>
            <person name="Weng S."/>
            <person name="Wong E.D."/>
            <person name="Lloyd P."/>
            <person name="Skrzypek M.S."/>
            <person name="Miyasato S.R."/>
            <person name="Simison M."/>
            <person name="Cherry J.M."/>
        </authorList>
    </citation>
    <scope>GENOME REANNOTATION</scope>
    <source>
        <strain>ATCC 204508 / S288c</strain>
    </source>
</reference>
<reference key="3">
    <citation type="journal article" date="2003" name="Nature">
        <title>Global analysis of protein expression in yeast.</title>
        <authorList>
            <person name="Ghaemmaghami S."/>
            <person name="Huh W.-K."/>
            <person name="Bower K."/>
            <person name="Howson R.W."/>
            <person name="Belle A."/>
            <person name="Dephoure N."/>
            <person name="O'Shea E.K."/>
            <person name="Weissman J.S."/>
        </authorList>
    </citation>
    <scope>LEVEL OF PROTEIN EXPRESSION [LARGE SCALE ANALYSIS]</scope>
</reference>
<reference key="4">
    <citation type="journal article" date="2012" name="Proc. Natl. Acad. Sci. U.S.A.">
        <title>N-terminal acetylome analyses and functional insights of the N-terminal acetyltransferase NatB.</title>
        <authorList>
            <person name="Van Damme P."/>
            <person name="Lasa M."/>
            <person name="Polevoda B."/>
            <person name="Gazquez C."/>
            <person name="Elosegui-Artola A."/>
            <person name="Kim D.S."/>
            <person name="De Juan-Pardo E."/>
            <person name="Demeyer K."/>
            <person name="Hole K."/>
            <person name="Larrea E."/>
            <person name="Timmerman E."/>
            <person name="Prieto J."/>
            <person name="Arnesen T."/>
            <person name="Sherman F."/>
            <person name="Gevaert K."/>
            <person name="Aldabe R."/>
        </authorList>
    </citation>
    <scope>ACETYLATION [LARGE SCALE ANALYSIS] AT SER-2</scope>
    <scope>CLEAVAGE OF INITIATOR METHIONINE [LARGE SCALE ANALYSIS]</scope>
    <scope>IDENTIFICATION BY MASS SPECTROMETRY [LARGE SCALE ANALYSIS]</scope>
</reference>
<dbReference type="EMBL" id="Z49210">
    <property type="protein sequence ID" value="CAA89110.1"/>
    <property type="molecule type" value="Genomic_DNA"/>
</dbReference>
<dbReference type="EMBL" id="BK006946">
    <property type="protein sequence ID" value="DAA09790.1"/>
    <property type="molecule type" value="Genomic_DNA"/>
</dbReference>
<dbReference type="PIR" id="S53964">
    <property type="entry name" value="S53964"/>
</dbReference>
<dbReference type="RefSeq" id="NP_013599.1">
    <property type="nucleotide sequence ID" value="NM_001182470.1"/>
</dbReference>
<dbReference type="PDB" id="1N6Z">
    <property type="method" value="NMR"/>
    <property type="chains" value="A=1-105"/>
</dbReference>
<dbReference type="PDBsum" id="1N6Z"/>
<dbReference type="BMRB" id="Q03759"/>
<dbReference type="SMR" id="Q03759"/>
<dbReference type="BioGRID" id="35035">
    <property type="interactions" value="154"/>
</dbReference>
<dbReference type="DIP" id="DIP-3849N"/>
<dbReference type="FunCoup" id="Q03759">
    <property type="interactions" value="66"/>
</dbReference>
<dbReference type="IntAct" id="Q03759">
    <property type="interactions" value="4"/>
</dbReference>
<dbReference type="STRING" id="4932.YML108W"/>
<dbReference type="iPTMnet" id="Q03759"/>
<dbReference type="PaxDb" id="4932-YML108W"/>
<dbReference type="PeptideAtlas" id="Q03759"/>
<dbReference type="DNASU" id="854863"/>
<dbReference type="EnsemblFungi" id="YML108W_mRNA">
    <property type="protein sequence ID" value="YML108W"/>
    <property type="gene ID" value="YML108W"/>
</dbReference>
<dbReference type="GeneID" id="854863"/>
<dbReference type="KEGG" id="sce:YML108W"/>
<dbReference type="AGR" id="SGD:S000004576"/>
<dbReference type="SGD" id="S000004576">
    <property type="gene designation" value="YML108W"/>
</dbReference>
<dbReference type="VEuPathDB" id="FungiDB:YML108W"/>
<dbReference type="eggNOG" id="ENOG502S3ZA">
    <property type="taxonomic scope" value="Eukaryota"/>
</dbReference>
<dbReference type="HOGENOM" id="CLU_2145549_0_0_1"/>
<dbReference type="InParanoid" id="Q03759"/>
<dbReference type="OMA" id="HIKYEIT"/>
<dbReference type="OrthoDB" id="4035606at2759"/>
<dbReference type="BioCyc" id="YEAST:G3O-32691-MONOMER"/>
<dbReference type="BioGRID-ORCS" id="854863">
    <property type="hits" value="0 hits in 10 CRISPR screens"/>
</dbReference>
<dbReference type="EvolutionaryTrace" id="Q03759"/>
<dbReference type="PRO" id="PR:Q03759"/>
<dbReference type="Proteomes" id="UP000002311">
    <property type="component" value="Chromosome XIII"/>
</dbReference>
<dbReference type="RNAct" id="Q03759">
    <property type="molecule type" value="protein"/>
</dbReference>
<dbReference type="GO" id="GO:0005737">
    <property type="term" value="C:cytoplasm"/>
    <property type="evidence" value="ECO:0007005"/>
    <property type="project" value="SGD"/>
</dbReference>
<dbReference type="GO" id="GO:0005634">
    <property type="term" value="C:nucleus"/>
    <property type="evidence" value="ECO:0007005"/>
    <property type="project" value="SGD"/>
</dbReference>
<dbReference type="FunFam" id="3.10.20.250:FF:000001">
    <property type="entry name" value="YML108W-like protein"/>
    <property type="match status" value="1"/>
</dbReference>
<dbReference type="Gene3D" id="3.10.20.250">
    <property type="entry name" value="YML108W-like"/>
    <property type="match status" value="1"/>
</dbReference>
<dbReference type="InterPro" id="IPR015080">
    <property type="entry name" value="DUF1892"/>
</dbReference>
<dbReference type="InterPro" id="IPR035946">
    <property type="entry name" value="YML108W-like_sf"/>
</dbReference>
<dbReference type="Pfam" id="PF08987">
    <property type="entry name" value="DUF1892"/>
    <property type="match status" value="1"/>
</dbReference>
<dbReference type="SUPFAM" id="SSF89975">
    <property type="entry name" value="Hypothetical protein Yml108w"/>
    <property type="match status" value="1"/>
</dbReference>
<accession>Q03759</accession>
<accession>D6W0H6</accession>
<sequence length="105" mass="12339">MSKSNTYRMLVLLEDDTKINKEDEKFLKGKPGKMHEFVDELILPFNVDELDELNTWFDKFDAEICIPNEGHIKYEISSDGLIVLMLDKEIEEVVEKVKKFVEENN</sequence>
<name>YMK8_YEAST</name>
<evidence type="ECO:0000269" key="1">
    <source>
    </source>
</evidence>
<evidence type="ECO:0007744" key="2">
    <source>
    </source>
</evidence>
<evidence type="ECO:0007829" key="3">
    <source>
        <dbReference type="PDB" id="1N6Z"/>
    </source>
</evidence>
<keyword id="KW-0002">3D-structure</keyword>
<keyword id="KW-0007">Acetylation</keyword>
<keyword id="KW-1185">Reference proteome</keyword>
<organism>
    <name type="scientific">Saccharomyces cerevisiae (strain ATCC 204508 / S288c)</name>
    <name type="common">Baker's yeast</name>
    <dbReference type="NCBI Taxonomy" id="559292"/>
    <lineage>
        <taxon>Eukaryota</taxon>
        <taxon>Fungi</taxon>
        <taxon>Dikarya</taxon>
        <taxon>Ascomycota</taxon>
        <taxon>Saccharomycotina</taxon>
        <taxon>Saccharomycetes</taxon>
        <taxon>Saccharomycetales</taxon>
        <taxon>Saccharomycetaceae</taxon>
        <taxon>Saccharomyces</taxon>
    </lineage>
</organism>
<gene>
    <name type="ordered locus">YML108W</name>
    <name type="ORF">YM8339.11</name>
</gene>
<comment type="miscellaneous">
    <text evidence="1">Present with 2610 molecules/cell in log phase SD medium.</text>
</comment>
<feature type="initiator methionine" description="Removed" evidence="2">
    <location>
        <position position="1"/>
    </location>
</feature>
<feature type="chain" id="PRO_0000203242" description="Uncharacterized protein YML108W">
    <location>
        <begin position="2"/>
        <end position="105"/>
    </location>
</feature>
<feature type="modified residue" description="N-acetylserine" evidence="2">
    <location>
        <position position="2"/>
    </location>
</feature>
<feature type="strand" evidence="3">
    <location>
        <begin position="7"/>
        <end position="13"/>
    </location>
</feature>
<feature type="turn" evidence="3">
    <location>
        <begin position="21"/>
        <end position="23"/>
    </location>
</feature>
<feature type="strand" evidence="3">
    <location>
        <begin position="25"/>
        <end position="27"/>
    </location>
</feature>
<feature type="strand" evidence="3">
    <location>
        <begin position="37"/>
        <end position="43"/>
    </location>
</feature>
<feature type="helix" evidence="3">
    <location>
        <begin position="50"/>
        <end position="65"/>
    </location>
</feature>
<feature type="strand" evidence="3">
    <location>
        <begin position="72"/>
        <end position="77"/>
    </location>
</feature>
<feature type="turn" evidence="3">
    <location>
        <begin position="78"/>
        <end position="80"/>
    </location>
</feature>
<feature type="strand" evidence="3">
    <location>
        <begin position="81"/>
        <end position="86"/>
    </location>
</feature>
<feature type="helix" evidence="3">
    <location>
        <begin position="88"/>
        <end position="90"/>
    </location>
</feature>
<feature type="helix" evidence="3">
    <location>
        <begin position="91"/>
        <end position="104"/>
    </location>
</feature>